<comment type="function">
    <text evidence="1">Involved in unsaturated fatty acids biosynthesis. Catalyzes the dehydration of short chain beta-hydroxyacyl-ACPs and long chain saturated and unsaturated beta-hydroxyacyl-ACPs.</text>
</comment>
<comment type="catalytic activity">
    <reaction evidence="1">
        <text>a (3R)-hydroxyacyl-[ACP] = a (2E)-enoyl-[ACP] + H2O</text>
        <dbReference type="Rhea" id="RHEA:13097"/>
        <dbReference type="Rhea" id="RHEA-COMP:9925"/>
        <dbReference type="Rhea" id="RHEA-COMP:9945"/>
        <dbReference type="ChEBI" id="CHEBI:15377"/>
        <dbReference type="ChEBI" id="CHEBI:78784"/>
        <dbReference type="ChEBI" id="CHEBI:78827"/>
        <dbReference type="EC" id="4.2.1.59"/>
    </reaction>
</comment>
<comment type="subcellular location">
    <subcellularLocation>
        <location evidence="1">Cytoplasm</location>
    </subcellularLocation>
</comment>
<comment type="similarity">
    <text evidence="1">Belongs to the thioester dehydratase family. FabZ subfamily.</text>
</comment>
<proteinExistence type="inferred from homology"/>
<accession>A5UXY2</accession>
<sequence length="143" mass="15695">MLTIQEIMAIIPHRYPFLLIDRILELEPGQRAVGEKLVTIGEPYFQGHFPNRPIMPGVLIVEALAQTGAVAALSLPENRGKMAFFAGIDGVRFRKPVYPGDTLRLEVRFDKMRRGIGKGTGVATVNGQLVCEGELMFALSSEG</sequence>
<keyword id="KW-0963">Cytoplasm</keyword>
<keyword id="KW-0441">Lipid A biosynthesis</keyword>
<keyword id="KW-0444">Lipid biosynthesis</keyword>
<keyword id="KW-0443">Lipid metabolism</keyword>
<keyword id="KW-0456">Lyase</keyword>
<protein>
    <recommendedName>
        <fullName evidence="1">3-hydroxyacyl-[acyl-carrier-protein] dehydratase FabZ</fullName>
        <ecNumber evidence="1">4.2.1.59</ecNumber>
    </recommendedName>
    <alternativeName>
        <fullName evidence="1">(3R)-hydroxymyristoyl-[acyl-carrier-protein] dehydratase</fullName>
        <shortName evidence="1">(3R)-hydroxymyristoyl-ACP dehydrase</shortName>
    </alternativeName>
    <alternativeName>
        <fullName evidence="1">Beta-hydroxyacyl-ACP dehydratase</fullName>
    </alternativeName>
</protein>
<organism>
    <name type="scientific">Roseiflexus sp. (strain RS-1)</name>
    <dbReference type="NCBI Taxonomy" id="357808"/>
    <lineage>
        <taxon>Bacteria</taxon>
        <taxon>Bacillati</taxon>
        <taxon>Chloroflexota</taxon>
        <taxon>Chloroflexia</taxon>
        <taxon>Chloroflexales</taxon>
        <taxon>Roseiflexineae</taxon>
        <taxon>Roseiflexaceae</taxon>
        <taxon>Roseiflexus</taxon>
    </lineage>
</organism>
<dbReference type="EC" id="4.2.1.59" evidence="1"/>
<dbReference type="EMBL" id="CP000686">
    <property type="protein sequence ID" value="ABQ91485.1"/>
    <property type="molecule type" value="Genomic_DNA"/>
</dbReference>
<dbReference type="RefSeq" id="WP_011957829.1">
    <property type="nucleotide sequence ID" value="NC_009523.1"/>
</dbReference>
<dbReference type="SMR" id="A5UXY2"/>
<dbReference type="STRING" id="357808.RoseRS_3122"/>
<dbReference type="KEGG" id="rrs:RoseRS_3122"/>
<dbReference type="eggNOG" id="COG0764">
    <property type="taxonomic scope" value="Bacteria"/>
</dbReference>
<dbReference type="HOGENOM" id="CLU_078912_3_0_0"/>
<dbReference type="OrthoDB" id="9772788at2"/>
<dbReference type="Proteomes" id="UP000006554">
    <property type="component" value="Chromosome"/>
</dbReference>
<dbReference type="GO" id="GO:0005737">
    <property type="term" value="C:cytoplasm"/>
    <property type="evidence" value="ECO:0007669"/>
    <property type="project" value="UniProtKB-SubCell"/>
</dbReference>
<dbReference type="GO" id="GO:0016020">
    <property type="term" value="C:membrane"/>
    <property type="evidence" value="ECO:0007669"/>
    <property type="project" value="GOC"/>
</dbReference>
<dbReference type="GO" id="GO:0019171">
    <property type="term" value="F:(3R)-hydroxyacyl-[acyl-carrier-protein] dehydratase activity"/>
    <property type="evidence" value="ECO:0007669"/>
    <property type="project" value="UniProtKB-EC"/>
</dbReference>
<dbReference type="GO" id="GO:0006633">
    <property type="term" value="P:fatty acid biosynthetic process"/>
    <property type="evidence" value="ECO:0007669"/>
    <property type="project" value="UniProtKB-UniRule"/>
</dbReference>
<dbReference type="GO" id="GO:0009245">
    <property type="term" value="P:lipid A biosynthetic process"/>
    <property type="evidence" value="ECO:0007669"/>
    <property type="project" value="UniProtKB-UniRule"/>
</dbReference>
<dbReference type="CDD" id="cd01288">
    <property type="entry name" value="FabZ"/>
    <property type="match status" value="1"/>
</dbReference>
<dbReference type="FunFam" id="3.10.129.10:FF:000001">
    <property type="entry name" value="3-hydroxyacyl-[acyl-carrier-protein] dehydratase FabZ"/>
    <property type="match status" value="1"/>
</dbReference>
<dbReference type="Gene3D" id="3.10.129.10">
    <property type="entry name" value="Hotdog Thioesterase"/>
    <property type="match status" value="1"/>
</dbReference>
<dbReference type="HAMAP" id="MF_00406">
    <property type="entry name" value="FabZ"/>
    <property type="match status" value="1"/>
</dbReference>
<dbReference type="InterPro" id="IPR013114">
    <property type="entry name" value="FabA_FabZ"/>
</dbReference>
<dbReference type="InterPro" id="IPR010084">
    <property type="entry name" value="FabZ"/>
</dbReference>
<dbReference type="InterPro" id="IPR029069">
    <property type="entry name" value="HotDog_dom_sf"/>
</dbReference>
<dbReference type="NCBIfam" id="TIGR01750">
    <property type="entry name" value="fabZ"/>
    <property type="match status" value="1"/>
</dbReference>
<dbReference type="NCBIfam" id="NF000582">
    <property type="entry name" value="PRK00006.1"/>
    <property type="match status" value="1"/>
</dbReference>
<dbReference type="PANTHER" id="PTHR30272">
    <property type="entry name" value="3-HYDROXYACYL-[ACYL-CARRIER-PROTEIN] DEHYDRATASE"/>
    <property type="match status" value="1"/>
</dbReference>
<dbReference type="PANTHER" id="PTHR30272:SF1">
    <property type="entry name" value="3-HYDROXYACYL-[ACYL-CARRIER-PROTEIN] DEHYDRATASE"/>
    <property type="match status" value="1"/>
</dbReference>
<dbReference type="Pfam" id="PF07977">
    <property type="entry name" value="FabA"/>
    <property type="match status" value="1"/>
</dbReference>
<dbReference type="SUPFAM" id="SSF54637">
    <property type="entry name" value="Thioesterase/thiol ester dehydrase-isomerase"/>
    <property type="match status" value="1"/>
</dbReference>
<evidence type="ECO:0000255" key="1">
    <source>
        <dbReference type="HAMAP-Rule" id="MF_00406"/>
    </source>
</evidence>
<gene>
    <name evidence="1" type="primary">fabZ</name>
    <name type="ordered locus">RoseRS_3122</name>
</gene>
<name>FABZ_ROSS1</name>
<reference key="1">
    <citation type="submission" date="2007-04" db="EMBL/GenBank/DDBJ databases">
        <title>Complete sequence of Roseiflexus sp. RS-1.</title>
        <authorList>
            <consortium name="US DOE Joint Genome Institute"/>
            <person name="Copeland A."/>
            <person name="Lucas S."/>
            <person name="Lapidus A."/>
            <person name="Barry K."/>
            <person name="Detter J.C."/>
            <person name="Glavina del Rio T."/>
            <person name="Hammon N."/>
            <person name="Israni S."/>
            <person name="Dalin E."/>
            <person name="Tice H."/>
            <person name="Pitluck S."/>
            <person name="Chertkov O."/>
            <person name="Brettin T."/>
            <person name="Bruce D."/>
            <person name="Han C."/>
            <person name="Schmutz J."/>
            <person name="Larimer F."/>
            <person name="Land M."/>
            <person name="Hauser L."/>
            <person name="Kyrpides N."/>
            <person name="Mikhailova N."/>
            <person name="Bryant D.A."/>
            <person name="Richardson P."/>
        </authorList>
    </citation>
    <scope>NUCLEOTIDE SEQUENCE [LARGE SCALE GENOMIC DNA]</scope>
    <source>
        <strain>RS-1</strain>
    </source>
</reference>
<feature type="chain" id="PRO_1000080446" description="3-hydroxyacyl-[acyl-carrier-protein] dehydratase FabZ">
    <location>
        <begin position="1"/>
        <end position="143"/>
    </location>
</feature>
<feature type="active site" evidence="1">
    <location>
        <position position="48"/>
    </location>
</feature>